<comment type="function">
    <text evidence="1">An essential GTPase which binds GTP, GDP and possibly (p)ppGpp with moderate affinity, with high nucleotide exchange rates and a fairly low GTP hydrolysis rate. Plays a role in control of the cell cycle, stress response, ribosome biogenesis and in those bacteria that undergo differentiation, in morphogenesis control.</text>
</comment>
<comment type="cofactor">
    <cofactor evidence="1">
        <name>Mg(2+)</name>
        <dbReference type="ChEBI" id="CHEBI:18420"/>
    </cofactor>
</comment>
<comment type="subunit">
    <text evidence="1">Monomer.</text>
</comment>
<comment type="subcellular location">
    <subcellularLocation>
        <location evidence="1">Cytoplasm</location>
    </subcellularLocation>
</comment>
<comment type="similarity">
    <text evidence="1">Belongs to the TRAFAC class OBG-HflX-like GTPase superfamily. OBG GTPase family.</text>
</comment>
<evidence type="ECO:0000255" key="1">
    <source>
        <dbReference type="HAMAP-Rule" id="MF_01454"/>
    </source>
</evidence>
<evidence type="ECO:0000255" key="2">
    <source>
        <dbReference type="PROSITE-ProRule" id="PRU01229"/>
    </source>
</evidence>
<evidence type="ECO:0000255" key="3">
    <source>
        <dbReference type="PROSITE-ProRule" id="PRU01231"/>
    </source>
</evidence>
<gene>
    <name evidence="1" type="primary">obg</name>
    <name type="ordered locus">BT9727_4174</name>
</gene>
<reference key="1">
    <citation type="journal article" date="2006" name="J. Bacteriol.">
        <title>Pathogenomic sequence analysis of Bacillus cereus and Bacillus thuringiensis isolates closely related to Bacillus anthracis.</title>
        <authorList>
            <person name="Han C.S."/>
            <person name="Xie G."/>
            <person name="Challacombe J.F."/>
            <person name="Altherr M.R."/>
            <person name="Bhotika S.S."/>
            <person name="Bruce D."/>
            <person name="Campbell C.S."/>
            <person name="Campbell M.L."/>
            <person name="Chen J."/>
            <person name="Chertkov O."/>
            <person name="Cleland C."/>
            <person name="Dimitrijevic M."/>
            <person name="Doggett N.A."/>
            <person name="Fawcett J.J."/>
            <person name="Glavina T."/>
            <person name="Goodwin L.A."/>
            <person name="Hill K.K."/>
            <person name="Hitchcock P."/>
            <person name="Jackson P.J."/>
            <person name="Keim P."/>
            <person name="Kewalramani A.R."/>
            <person name="Longmire J."/>
            <person name="Lucas S."/>
            <person name="Malfatti S."/>
            <person name="McMurry K."/>
            <person name="Meincke L.J."/>
            <person name="Misra M."/>
            <person name="Moseman B.L."/>
            <person name="Mundt M."/>
            <person name="Munk A.C."/>
            <person name="Okinaka R.T."/>
            <person name="Parson-Quintana B."/>
            <person name="Reilly L.P."/>
            <person name="Richardson P."/>
            <person name="Robinson D.L."/>
            <person name="Rubin E."/>
            <person name="Saunders E."/>
            <person name="Tapia R."/>
            <person name="Tesmer J.G."/>
            <person name="Thayer N."/>
            <person name="Thompson L.S."/>
            <person name="Tice H."/>
            <person name="Ticknor L.O."/>
            <person name="Wills P.L."/>
            <person name="Brettin T.S."/>
            <person name="Gilna P."/>
        </authorList>
    </citation>
    <scope>NUCLEOTIDE SEQUENCE [LARGE SCALE GENOMIC DNA]</scope>
    <source>
        <strain>97-27</strain>
    </source>
</reference>
<keyword id="KW-0963">Cytoplasm</keyword>
<keyword id="KW-0342">GTP-binding</keyword>
<keyword id="KW-0378">Hydrolase</keyword>
<keyword id="KW-0460">Magnesium</keyword>
<keyword id="KW-0479">Metal-binding</keyword>
<keyword id="KW-0547">Nucleotide-binding</keyword>
<feature type="chain" id="PRO_0000385729" description="GTPase Obg">
    <location>
        <begin position="1"/>
        <end position="428"/>
    </location>
</feature>
<feature type="domain" description="Obg" evidence="3">
    <location>
        <begin position="1"/>
        <end position="158"/>
    </location>
</feature>
<feature type="domain" description="OBG-type G" evidence="1">
    <location>
        <begin position="159"/>
        <end position="329"/>
    </location>
</feature>
<feature type="domain" description="OCT" evidence="2">
    <location>
        <begin position="350"/>
        <end position="428"/>
    </location>
</feature>
<feature type="binding site" evidence="1">
    <location>
        <begin position="165"/>
        <end position="172"/>
    </location>
    <ligand>
        <name>GTP</name>
        <dbReference type="ChEBI" id="CHEBI:37565"/>
    </ligand>
</feature>
<feature type="binding site" evidence="1">
    <location>
        <position position="172"/>
    </location>
    <ligand>
        <name>Mg(2+)</name>
        <dbReference type="ChEBI" id="CHEBI:18420"/>
    </ligand>
</feature>
<feature type="binding site" evidence="1">
    <location>
        <begin position="190"/>
        <end position="194"/>
    </location>
    <ligand>
        <name>GTP</name>
        <dbReference type="ChEBI" id="CHEBI:37565"/>
    </ligand>
</feature>
<feature type="binding site" evidence="1">
    <location>
        <position position="192"/>
    </location>
    <ligand>
        <name>Mg(2+)</name>
        <dbReference type="ChEBI" id="CHEBI:18420"/>
    </ligand>
</feature>
<feature type="binding site" evidence="1">
    <location>
        <begin position="212"/>
        <end position="215"/>
    </location>
    <ligand>
        <name>GTP</name>
        <dbReference type="ChEBI" id="CHEBI:37565"/>
    </ligand>
</feature>
<feature type="binding site" evidence="1">
    <location>
        <begin position="282"/>
        <end position="285"/>
    </location>
    <ligand>
        <name>GTP</name>
        <dbReference type="ChEBI" id="CHEBI:37565"/>
    </ligand>
</feature>
<feature type="binding site" evidence="1">
    <location>
        <begin position="310"/>
        <end position="312"/>
    </location>
    <ligand>
        <name>GTP</name>
        <dbReference type="ChEBI" id="CHEBI:37565"/>
    </ligand>
</feature>
<dbReference type="EC" id="3.6.5.-" evidence="1"/>
<dbReference type="EMBL" id="AE017355">
    <property type="protein sequence ID" value="AAT63796.1"/>
    <property type="molecule type" value="Genomic_DNA"/>
</dbReference>
<dbReference type="RefSeq" id="YP_038491.1">
    <property type="nucleotide sequence ID" value="NC_005957.1"/>
</dbReference>
<dbReference type="SMR" id="Q6HD85"/>
<dbReference type="KEGG" id="btk:BT9727_4174"/>
<dbReference type="PATRIC" id="fig|281309.8.peg.4452"/>
<dbReference type="HOGENOM" id="CLU_011747_2_1_9"/>
<dbReference type="Proteomes" id="UP000001301">
    <property type="component" value="Chromosome"/>
</dbReference>
<dbReference type="GO" id="GO:0005737">
    <property type="term" value="C:cytoplasm"/>
    <property type="evidence" value="ECO:0007669"/>
    <property type="project" value="UniProtKB-SubCell"/>
</dbReference>
<dbReference type="GO" id="GO:0005525">
    <property type="term" value="F:GTP binding"/>
    <property type="evidence" value="ECO:0007669"/>
    <property type="project" value="UniProtKB-UniRule"/>
</dbReference>
<dbReference type="GO" id="GO:0003924">
    <property type="term" value="F:GTPase activity"/>
    <property type="evidence" value="ECO:0007669"/>
    <property type="project" value="UniProtKB-UniRule"/>
</dbReference>
<dbReference type="GO" id="GO:0000287">
    <property type="term" value="F:magnesium ion binding"/>
    <property type="evidence" value="ECO:0007669"/>
    <property type="project" value="InterPro"/>
</dbReference>
<dbReference type="GO" id="GO:0042254">
    <property type="term" value="P:ribosome biogenesis"/>
    <property type="evidence" value="ECO:0007669"/>
    <property type="project" value="UniProtKB-UniRule"/>
</dbReference>
<dbReference type="CDD" id="cd01898">
    <property type="entry name" value="Obg"/>
    <property type="match status" value="1"/>
</dbReference>
<dbReference type="FunFam" id="2.70.210.12:FF:000001">
    <property type="entry name" value="GTPase Obg"/>
    <property type="match status" value="1"/>
</dbReference>
<dbReference type="FunFam" id="3.40.50.300:FF:000515">
    <property type="entry name" value="GTPase Obg"/>
    <property type="match status" value="1"/>
</dbReference>
<dbReference type="Gene3D" id="3.30.300.350">
    <property type="entry name" value="GTP-binding protein OBG, C-terminal domain"/>
    <property type="match status" value="1"/>
</dbReference>
<dbReference type="Gene3D" id="2.70.210.12">
    <property type="entry name" value="GTP1/OBG domain"/>
    <property type="match status" value="1"/>
</dbReference>
<dbReference type="Gene3D" id="3.40.50.300">
    <property type="entry name" value="P-loop containing nucleotide triphosphate hydrolases"/>
    <property type="match status" value="1"/>
</dbReference>
<dbReference type="HAMAP" id="MF_01454">
    <property type="entry name" value="GTPase_Obg"/>
    <property type="match status" value="1"/>
</dbReference>
<dbReference type="InterPro" id="IPR031167">
    <property type="entry name" value="G_OBG"/>
</dbReference>
<dbReference type="InterPro" id="IPR006073">
    <property type="entry name" value="GTP-bd"/>
</dbReference>
<dbReference type="InterPro" id="IPR014100">
    <property type="entry name" value="GTP-bd_Obg/CgtA"/>
</dbReference>
<dbReference type="InterPro" id="IPR036346">
    <property type="entry name" value="GTP-bd_prot_GTP1/OBG_C_sf"/>
</dbReference>
<dbReference type="InterPro" id="IPR006074">
    <property type="entry name" value="GTP1-OBG_CS"/>
</dbReference>
<dbReference type="InterPro" id="IPR006169">
    <property type="entry name" value="GTP1_OBG_dom"/>
</dbReference>
<dbReference type="InterPro" id="IPR036726">
    <property type="entry name" value="GTP1_OBG_dom_sf"/>
</dbReference>
<dbReference type="InterPro" id="IPR045086">
    <property type="entry name" value="OBG_GTPase"/>
</dbReference>
<dbReference type="InterPro" id="IPR015349">
    <property type="entry name" value="OCT_dom"/>
</dbReference>
<dbReference type="InterPro" id="IPR027417">
    <property type="entry name" value="P-loop_NTPase"/>
</dbReference>
<dbReference type="InterPro" id="IPR005225">
    <property type="entry name" value="Small_GTP-bd"/>
</dbReference>
<dbReference type="NCBIfam" id="TIGR02729">
    <property type="entry name" value="Obg_CgtA"/>
    <property type="match status" value="1"/>
</dbReference>
<dbReference type="NCBIfam" id="TIGR03595">
    <property type="entry name" value="Obg_CgtA_exten"/>
    <property type="match status" value="1"/>
</dbReference>
<dbReference type="NCBIfam" id="NF008954">
    <property type="entry name" value="PRK12296.1"/>
    <property type="match status" value="1"/>
</dbReference>
<dbReference type="NCBIfam" id="NF008955">
    <property type="entry name" value="PRK12297.1"/>
    <property type="match status" value="1"/>
</dbReference>
<dbReference type="NCBIfam" id="NF008956">
    <property type="entry name" value="PRK12299.1"/>
    <property type="match status" value="1"/>
</dbReference>
<dbReference type="NCBIfam" id="TIGR00231">
    <property type="entry name" value="small_GTP"/>
    <property type="match status" value="1"/>
</dbReference>
<dbReference type="PANTHER" id="PTHR11702">
    <property type="entry name" value="DEVELOPMENTALLY REGULATED GTP-BINDING PROTEIN-RELATED"/>
    <property type="match status" value="1"/>
</dbReference>
<dbReference type="PANTHER" id="PTHR11702:SF31">
    <property type="entry name" value="MITOCHONDRIAL RIBOSOME-ASSOCIATED GTPASE 2"/>
    <property type="match status" value="1"/>
</dbReference>
<dbReference type="Pfam" id="PF09269">
    <property type="entry name" value="DUF1967"/>
    <property type="match status" value="1"/>
</dbReference>
<dbReference type="Pfam" id="PF01018">
    <property type="entry name" value="GTP1_OBG"/>
    <property type="match status" value="1"/>
</dbReference>
<dbReference type="Pfam" id="PF01926">
    <property type="entry name" value="MMR_HSR1"/>
    <property type="match status" value="1"/>
</dbReference>
<dbReference type="PIRSF" id="PIRSF002401">
    <property type="entry name" value="GTP_bd_Obg/CgtA"/>
    <property type="match status" value="1"/>
</dbReference>
<dbReference type="PRINTS" id="PR00326">
    <property type="entry name" value="GTP1OBG"/>
</dbReference>
<dbReference type="SUPFAM" id="SSF102741">
    <property type="entry name" value="Obg GTP-binding protein C-terminal domain"/>
    <property type="match status" value="1"/>
</dbReference>
<dbReference type="SUPFAM" id="SSF82051">
    <property type="entry name" value="Obg GTP-binding protein N-terminal domain"/>
    <property type="match status" value="1"/>
</dbReference>
<dbReference type="SUPFAM" id="SSF52540">
    <property type="entry name" value="P-loop containing nucleoside triphosphate hydrolases"/>
    <property type="match status" value="1"/>
</dbReference>
<dbReference type="PROSITE" id="PS51710">
    <property type="entry name" value="G_OBG"/>
    <property type="match status" value="1"/>
</dbReference>
<dbReference type="PROSITE" id="PS00905">
    <property type="entry name" value="GTP1_OBG"/>
    <property type="match status" value="1"/>
</dbReference>
<dbReference type="PROSITE" id="PS51883">
    <property type="entry name" value="OBG"/>
    <property type="match status" value="1"/>
</dbReference>
<dbReference type="PROSITE" id="PS51881">
    <property type="entry name" value="OCT"/>
    <property type="match status" value="1"/>
</dbReference>
<sequence length="428" mass="47211">MFVDQVKIYVKGGDGGNGMVAYRREKYVPKGGPAGGDGGKGADVVFIVEEGLRTLMDFRYQRHFKADRGQHGMSKGQHGRKSEDLLVKVPPGTVVKDEKTGQILADLVTHGQTAVIAKGGRGGRGNSRFATATNPAPEIAENGEPGQERDVILELKVLADVGLVGFPSVGKSTLLSVVSSARPKIAEYHFTTIVPNLGVVETGDNRSFVMADLPGLIEGAHAGVGLGHQFLRHIERTRVIVHVIDMSGLEGRDPYEDYVTINNELKEYNLRLTERPQVVVANKMDMPDAEENLQAFKEKVGDEVKIFPISAVTKQGVRDLLFEVANLIETTPEFPIHEVVDESDTSVMYKFETEGVKFDITRESDGTFVISGYDIEKTFKMTDFSRDESVRRFARQMRGMGIDEALRARGAKDGDIVKILEYEFEFID</sequence>
<organism>
    <name type="scientific">Bacillus thuringiensis subsp. konkukian (strain 97-27)</name>
    <dbReference type="NCBI Taxonomy" id="281309"/>
    <lineage>
        <taxon>Bacteria</taxon>
        <taxon>Bacillati</taxon>
        <taxon>Bacillota</taxon>
        <taxon>Bacilli</taxon>
        <taxon>Bacillales</taxon>
        <taxon>Bacillaceae</taxon>
        <taxon>Bacillus</taxon>
        <taxon>Bacillus cereus group</taxon>
    </lineage>
</organism>
<protein>
    <recommendedName>
        <fullName evidence="1">GTPase Obg</fullName>
        <ecNumber evidence="1">3.6.5.-</ecNumber>
    </recommendedName>
    <alternativeName>
        <fullName evidence="1">GTP-binding protein Obg</fullName>
    </alternativeName>
</protein>
<name>OBG_BACHK</name>
<proteinExistence type="inferred from homology"/>
<accession>Q6HD85</accession>